<gene>
    <name evidence="1" type="primary">pyrF</name>
    <name type="ordered locus">YPK_2024</name>
</gene>
<dbReference type="EC" id="4.1.1.23" evidence="1"/>
<dbReference type="EMBL" id="CP000950">
    <property type="protein sequence ID" value="ACA68311.1"/>
    <property type="molecule type" value="Genomic_DNA"/>
</dbReference>
<dbReference type="RefSeq" id="WP_012304080.1">
    <property type="nucleotide sequence ID" value="NZ_CP009792.1"/>
</dbReference>
<dbReference type="SMR" id="B1JKQ0"/>
<dbReference type="KEGG" id="ypy:YPK_2024"/>
<dbReference type="PATRIC" id="fig|502800.11.peg.2701"/>
<dbReference type="UniPathway" id="UPA00070">
    <property type="reaction ID" value="UER00120"/>
</dbReference>
<dbReference type="GO" id="GO:0005829">
    <property type="term" value="C:cytosol"/>
    <property type="evidence" value="ECO:0007669"/>
    <property type="project" value="TreeGrafter"/>
</dbReference>
<dbReference type="GO" id="GO:0004590">
    <property type="term" value="F:orotidine-5'-phosphate decarboxylase activity"/>
    <property type="evidence" value="ECO:0007669"/>
    <property type="project" value="UniProtKB-UniRule"/>
</dbReference>
<dbReference type="GO" id="GO:0006207">
    <property type="term" value="P:'de novo' pyrimidine nucleobase biosynthetic process"/>
    <property type="evidence" value="ECO:0007669"/>
    <property type="project" value="InterPro"/>
</dbReference>
<dbReference type="GO" id="GO:0044205">
    <property type="term" value="P:'de novo' UMP biosynthetic process"/>
    <property type="evidence" value="ECO:0007669"/>
    <property type="project" value="UniProtKB-UniRule"/>
</dbReference>
<dbReference type="CDD" id="cd04725">
    <property type="entry name" value="OMP_decarboxylase_like"/>
    <property type="match status" value="1"/>
</dbReference>
<dbReference type="FunFam" id="3.20.20.70:FF:000015">
    <property type="entry name" value="Orotidine 5'-phosphate decarboxylase"/>
    <property type="match status" value="1"/>
</dbReference>
<dbReference type="Gene3D" id="3.20.20.70">
    <property type="entry name" value="Aldolase class I"/>
    <property type="match status" value="1"/>
</dbReference>
<dbReference type="HAMAP" id="MF_01200_B">
    <property type="entry name" value="OMPdecase_type1_B"/>
    <property type="match status" value="1"/>
</dbReference>
<dbReference type="InterPro" id="IPR013785">
    <property type="entry name" value="Aldolase_TIM"/>
</dbReference>
<dbReference type="InterPro" id="IPR014732">
    <property type="entry name" value="OMPdecase"/>
</dbReference>
<dbReference type="InterPro" id="IPR018089">
    <property type="entry name" value="OMPdecase_AS"/>
</dbReference>
<dbReference type="InterPro" id="IPR047596">
    <property type="entry name" value="OMPdecase_bac"/>
</dbReference>
<dbReference type="InterPro" id="IPR001754">
    <property type="entry name" value="OMPdeCOase_dom"/>
</dbReference>
<dbReference type="InterPro" id="IPR011060">
    <property type="entry name" value="RibuloseP-bd_barrel"/>
</dbReference>
<dbReference type="NCBIfam" id="NF001273">
    <property type="entry name" value="PRK00230.1"/>
    <property type="match status" value="1"/>
</dbReference>
<dbReference type="NCBIfam" id="TIGR01740">
    <property type="entry name" value="pyrF"/>
    <property type="match status" value="1"/>
</dbReference>
<dbReference type="PANTHER" id="PTHR32119">
    <property type="entry name" value="OROTIDINE 5'-PHOSPHATE DECARBOXYLASE"/>
    <property type="match status" value="1"/>
</dbReference>
<dbReference type="PANTHER" id="PTHR32119:SF2">
    <property type="entry name" value="OROTIDINE 5'-PHOSPHATE DECARBOXYLASE"/>
    <property type="match status" value="1"/>
</dbReference>
<dbReference type="Pfam" id="PF00215">
    <property type="entry name" value="OMPdecase"/>
    <property type="match status" value="1"/>
</dbReference>
<dbReference type="SMART" id="SM00934">
    <property type="entry name" value="OMPdecase"/>
    <property type="match status" value="1"/>
</dbReference>
<dbReference type="SUPFAM" id="SSF51366">
    <property type="entry name" value="Ribulose-phoshate binding barrel"/>
    <property type="match status" value="1"/>
</dbReference>
<dbReference type="PROSITE" id="PS00156">
    <property type="entry name" value="OMPDECASE"/>
    <property type="match status" value="1"/>
</dbReference>
<name>PYRF_YERPY</name>
<accession>B1JKQ0</accession>
<feature type="chain" id="PRO_1000138576" description="Orotidine 5'-phosphate decarboxylase">
    <location>
        <begin position="1"/>
        <end position="245"/>
    </location>
</feature>
<feature type="active site" description="Proton donor" evidence="1">
    <location>
        <position position="73"/>
    </location>
</feature>
<feature type="binding site" evidence="1">
    <location>
        <position position="22"/>
    </location>
    <ligand>
        <name>substrate</name>
    </ligand>
</feature>
<feature type="binding site" evidence="1">
    <location>
        <position position="44"/>
    </location>
    <ligand>
        <name>substrate</name>
    </ligand>
</feature>
<feature type="binding site" evidence="1">
    <location>
        <begin position="71"/>
        <end position="80"/>
    </location>
    <ligand>
        <name>substrate</name>
    </ligand>
</feature>
<feature type="binding site" evidence="1">
    <location>
        <position position="131"/>
    </location>
    <ligand>
        <name>substrate</name>
    </ligand>
</feature>
<feature type="binding site" evidence="1">
    <location>
        <position position="192"/>
    </location>
    <ligand>
        <name>substrate</name>
    </ligand>
</feature>
<feature type="binding site" evidence="1">
    <location>
        <position position="201"/>
    </location>
    <ligand>
        <name>substrate</name>
    </ligand>
</feature>
<feature type="binding site" evidence="1">
    <location>
        <position position="221"/>
    </location>
    <ligand>
        <name>substrate</name>
    </ligand>
</feature>
<feature type="binding site" evidence="1">
    <location>
        <position position="222"/>
    </location>
    <ligand>
        <name>substrate</name>
    </ligand>
</feature>
<evidence type="ECO:0000255" key="1">
    <source>
        <dbReference type="HAMAP-Rule" id="MF_01200"/>
    </source>
</evidence>
<proteinExistence type="inferred from homology"/>
<reference key="1">
    <citation type="submission" date="2008-02" db="EMBL/GenBank/DDBJ databases">
        <title>Complete sequence of Yersinia pseudotuberculosis YPIII.</title>
        <authorList>
            <consortium name="US DOE Joint Genome Institute"/>
            <person name="Copeland A."/>
            <person name="Lucas S."/>
            <person name="Lapidus A."/>
            <person name="Glavina del Rio T."/>
            <person name="Dalin E."/>
            <person name="Tice H."/>
            <person name="Bruce D."/>
            <person name="Goodwin L."/>
            <person name="Pitluck S."/>
            <person name="Munk A.C."/>
            <person name="Brettin T."/>
            <person name="Detter J.C."/>
            <person name="Han C."/>
            <person name="Tapia R."/>
            <person name="Schmutz J."/>
            <person name="Larimer F."/>
            <person name="Land M."/>
            <person name="Hauser L."/>
            <person name="Challacombe J.F."/>
            <person name="Green L."/>
            <person name="Lindler L.E."/>
            <person name="Nikolich M.P."/>
            <person name="Richardson P."/>
        </authorList>
    </citation>
    <scope>NUCLEOTIDE SEQUENCE [LARGE SCALE GENOMIC DNA]</scope>
    <source>
        <strain>YPIII</strain>
    </source>
</reference>
<protein>
    <recommendedName>
        <fullName evidence="1">Orotidine 5'-phosphate decarboxylase</fullName>
        <ecNumber evidence="1">4.1.1.23</ecNumber>
    </recommendedName>
    <alternativeName>
        <fullName evidence="1">OMP decarboxylase</fullName>
        <shortName evidence="1">OMPDCase</shortName>
        <shortName evidence="1">OMPdecase</shortName>
    </alternativeName>
</protein>
<sequence length="245" mass="26179">MTSATKTNNSGSISSPIVVALDYANKDAALAFADQVSPQDCRLKVGKEMFTLYGPELIRDLHQRGFDVFLDLKFHDIPNTTARAVAAAAELGVWMVNVHASGGARMMSAAKEALLPYGAQAPLLIAVTVLTSMDGEDLRDIGITISPAEQAERLAKLTWDCGLDGVVCSAHEAVRLKQVCGEDFSLVTPGIRPQGSEAGDQRRIMTPEQAVAAGVDYMVIGRPITQSPDPEKTLREILASLTKVA</sequence>
<comment type="function">
    <text evidence="1">Catalyzes the decarboxylation of orotidine 5'-monophosphate (OMP) to uridine 5'-monophosphate (UMP).</text>
</comment>
<comment type="catalytic activity">
    <reaction evidence="1">
        <text>orotidine 5'-phosphate + H(+) = UMP + CO2</text>
        <dbReference type="Rhea" id="RHEA:11596"/>
        <dbReference type="ChEBI" id="CHEBI:15378"/>
        <dbReference type="ChEBI" id="CHEBI:16526"/>
        <dbReference type="ChEBI" id="CHEBI:57538"/>
        <dbReference type="ChEBI" id="CHEBI:57865"/>
        <dbReference type="EC" id="4.1.1.23"/>
    </reaction>
</comment>
<comment type="pathway">
    <text evidence="1">Pyrimidine metabolism; UMP biosynthesis via de novo pathway; UMP from orotate: step 2/2.</text>
</comment>
<comment type="subunit">
    <text evidence="1">Homodimer.</text>
</comment>
<comment type="similarity">
    <text evidence="1">Belongs to the OMP decarboxylase family. Type 1 subfamily.</text>
</comment>
<keyword id="KW-0210">Decarboxylase</keyword>
<keyword id="KW-0456">Lyase</keyword>
<keyword id="KW-0665">Pyrimidine biosynthesis</keyword>
<organism>
    <name type="scientific">Yersinia pseudotuberculosis serotype O:3 (strain YPIII)</name>
    <dbReference type="NCBI Taxonomy" id="502800"/>
    <lineage>
        <taxon>Bacteria</taxon>
        <taxon>Pseudomonadati</taxon>
        <taxon>Pseudomonadota</taxon>
        <taxon>Gammaproteobacteria</taxon>
        <taxon>Enterobacterales</taxon>
        <taxon>Yersiniaceae</taxon>
        <taxon>Yersinia</taxon>
    </lineage>
</organism>